<proteinExistence type="inferred from homology"/>
<sequence>MSFSVDVLANIAIELQRGIGHQDRFQRLITTLRQVLECDASALLRYDSRQFIPLAIDGLAKGVLGRRFALEGHPRLEAIARAGDVVRFPADSELPDPYDGLIPGQESLKVHACVGLPLFAGQNLIGALTLDGMQPDQFDVFSDEELRLIAALAAGALSNALLIEQLESQNMMPGDATPFEAVKQTQMIGLSPGMTQLKKEIEIVAASDLNVLISGETGTGKELVAKAIHEASPRAVNPLVYLNCAALPESVAESELFGHVKGAFTGAISNRSGKFEMADNGTLFLDEIGELSLALQAKLLRVLQYGDIQRVGDDRSLRVDVRVLAATNRDLREEVLAGRFRADLFHRLSVFPLSVPPLRERGDDVILLAGYFCEQCRLRLGLSRVVLSAGARNLLQHYRFPGNVRELEHAIHRAVVLARATRNGDEVILEAQHFAFPEVTLPPPEAAAVPVVKQNLREATEAFQRETIRQALAQNHHNWAACARMLETDVANLHRLAKRLGMKD</sequence>
<protein>
    <recommendedName>
        <fullName evidence="1">Anaerobic nitric oxide reductase transcription regulator NorR</fullName>
    </recommendedName>
</protein>
<dbReference type="EMBL" id="CP000036">
    <property type="protein sequence ID" value="ABB67335.1"/>
    <property type="status" value="ALT_INIT"/>
    <property type="molecule type" value="Genomic_DNA"/>
</dbReference>
<dbReference type="RefSeq" id="WP_000010791.1">
    <property type="nucleotide sequence ID" value="NC_007613.1"/>
</dbReference>
<dbReference type="SMR" id="Q31X73"/>
<dbReference type="KEGG" id="sbo:SBO_2809"/>
<dbReference type="HOGENOM" id="CLU_000445_125_0_6"/>
<dbReference type="UniPathway" id="UPA00638"/>
<dbReference type="Proteomes" id="UP000007067">
    <property type="component" value="Chromosome"/>
</dbReference>
<dbReference type="GO" id="GO:0005524">
    <property type="term" value="F:ATP binding"/>
    <property type="evidence" value="ECO:0007669"/>
    <property type="project" value="UniProtKB-UniRule"/>
</dbReference>
<dbReference type="GO" id="GO:0016887">
    <property type="term" value="F:ATP hydrolysis activity"/>
    <property type="evidence" value="ECO:0007669"/>
    <property type="project" value="InterPro"/>
</dbReference>
<dbReference type="GO" id="GO:0003677">
    <property type="term" value="F:DNA binding"/>
    <property type="evidence" value="ECO:0007669"/>
    <property type="project" value="UniProtKB-KW"/>
</dbReference>
<dbReference type="GO" id="GO:0003700">
    <property type="term" value="F:DNA-binding transcription factor activity"/>
    <property type="evidence" value="ECO:0007669"/>
    <property type="project" value="UniProtKB-UniRule"/>
</dbReference>
<dbReference type="GO" id="GO:0000160">
    <property type="term" value="P:phosphorelay signal transduction system"/>
    <property type="evidence" value="ECO:0007669"/>
    <property type="project" value="UniProtKB-UniRule"/>
</dbReference>
<dbReference type="CDD" id="cd00009">
    <property type="entry name" value="AAA"/>
    <property type="match status" value="1"/>
</dbReference>
<dbReference type="FunFam" id="1.10.10.60:FF:000188">
    <property type="entry name" value="Anaerobic nitric oxide reductase transcription regulator NorR"/>
    <property type="match status" value="1"/>
</dbReference>
<dbReference type="FunFam" id="1.10.8.60:FF:000045">
    <property type="entry name" value="Anaerobic nitric oxide reductase transcription regulator NorR"/>
    <property type="match status" value="1"/>
</dbReference>
<dbReference type="FunFam" id="3.30.450.40:FF:000021">
    <property type="entry name" value="Anaerobic nitric oxide reductase transcription regulator NorR"/>
    <property type="match status" value="1"/>
</dbReference>
<dbReference type="FunFam" id="3.40.50.300:FF:000006">
    <property type="entry name" value="DNA-binding transcriptional regulator NtrC"/>
    <property type="match status" value="1"/>
</dbReference>
<dbReference type="Gene3D" id="1.10.8.60">
    <property type="match status" value="1"/>
</dbReference>
<dbReference type="Gene3D" id="3.30.450.40">
    <property type="match status" value="1"/>
</dbReference>
<dbReference type="Gene3D" id="1.10.10.60">
    <property type="entry name" value="Homeodomain-like"/>
    <property type="match status" value="1"/>
</dbReference>
<dbReference type="Gene3D" id="3.40.50.300">
    <property type="entry name" value="P-loop containing nucleotide triphosphate hydrolases"/>
    <property type="match status" value="1"/>
</dbReference>
<dbReference type="HAMAP" id="MF_01314">
    <property type="entry name" value="NorR"/>
    <property type="match status" value="1"/>
</dbReference>
<dbReference type="InterPro" id="IPR003593">
    <property type="entry name" value="AAA+_ATPase"/>
</dbReference>
<dbReference type="InterPro" id="IPR003018">
    <property type="entry name" value="GAF"/>
</dbReference>
<dbReference type="InterPro" id="IPR029016">
    <property type="entry name" value="GAF-like_dom_sf"/>
</dbReference>
<dbReference type="InterPro" id="IPR009057">
    <property type="entry name" value="Homeodomain-like_sf"/>
</dbReference>
<dbReference type="InterPro" id="IPR023944">
    <property type="entry name" value="NorR"/>
</dbReference>
<dbReference type="InterPro" id="IPR027417">
    <property type="entry name" value="P-loop_NTPase"/>
</dbReference>
<dbReference type="InterPro" id="IPR002078">
    <property type="entry name" value="Sigma_54_int"/>
</dbReference>
<dbReference type="InterPro" id="IPR025662">
    <property type="entry name" value="Sigma_54_int_dom_ATP-bd_1"/>
</dbReference>
<dbReference type="InterPro" id="IPR025943">
    <property type="entry name" value="Sigma_54_int_dom_ATP-bd_2"/>
</dbReference>
<dbReference type="InterPro" id="IPR025944">
    <property type="entry name" value="Sigma_54_int_dom_CS"/>
</dbReference>
<dbReference type="NCBIfam" id="NF003451">
    <property type="entry name" value="PRK05022.1"/>
    <property type="match status" value="1"/>
</dbReference>
<dbReference type="PANTHER" id="PTHR32071:SF35">
    <property type="entry name" value="ANAEROBIC NITRIC OXIDE REDUCTASE TRANSCRIPTION REGULATOR NORR"/>
    <property type="match status" value="1"/>
</dbReference>
<dbReference type="PANTHER" id="PTHR32071">
    <property type="entry name" value="TRANSCRIPTIONAL REGULATORY PROTEIN"/>
    <property type="match status" value="1"/>
</dbReference>
<dbReference type="Pfam" id="PF01590">
    <property type="entry name" value="GAF"/>
    <property type="match status" value="1"/>
</dbReference>
<dbReference type="Pfam" id="PF00158">
    <property type="entry name" value="Sigma54_activat"/>
    <property type="match status" value="1"/>
</dbReference>
<dbReference type="SMART" id="SM00382">
    <property type="entry name" value="AAA"/>
    <property type="match status" value="1"/>
</dbReference>
<dbReference type="SMART" id="SM00065">
    <property type="entry name" value="GAF"/>
    <property type="match status" value="1"/>
</dbReference>
<dbReference type="SUPFAM" id="SSF55781">
    <property type="entry name" value="GAF domain-like"/>
    <property type="match status" value="1"/>
</dbReference>
<dbReference type="SUPFAM" id="SSF46689">
    <property type="entry name" value="Homeodomain-like"/>
    <property type="match status" value="1"/>
</dbReference>
<dbReference type="SUPFAM" id="SSF52540">
    <property type="entry name" value="P-loop containing nucleoside triphosphate hydrolases"/>
    <property type="match status" value="1"/>
</dbReference>
<dbReference type="PROSITE" id="PS00675">
    <property type="entry name" value="SIGMA54_INTERACT_1"/>
    <property type="match status" value="1"/>
</dbReference>
<dbReference type="PROSITE" id="PS00676">
    <property type="entry name" value="SIGMA54_INTERACT_2"/>
    <property type="match status" value="1"/>
</dbReference>
<dbReference type="PROSITE" id="PS00688">
    <property type="entry name" value="SIGMA54_INTERACT_3"/>
    <property type="match status" value="1"/>
</dbReference>
<dbReference type="PROSITE" id="PS50045">
    <property type="entry name" value="SIGMA54_INTERACT_4"/>
    <property type="match status" value="1"/>
</dbReference>
<reference key="1">
    <citation type="journal article" date="2005" name="Nucleic Acids Res.">
        <title>Genome dynamics and diversity of Shigella species, the etiologic agents of bacillary dysentery.</title>
        <authorList>
            <person name="Yang F."/>
            <person name="Yang J."/>
            <person name="Zhang X."/>
            <person name="Chen L."/>
            <person name="Jiang Y."/>
            <person name="Yan Y."/>
            <person name="Tang X."/>
            <person name="Wang J."/>
            <person name="Xiong Z."/>
            <person name="Dong J."/>
            <person name="Xue Y."/>
            <person name="Zhu Y."/>
            <person name="Xu X."/>
            <person name="Sun L."/>
            <person name="Chen S."/>
            <person name="Nie H."/>
            <person name="Peng J."/>
            <person name="Xu J."/>
            <person name="Wang Y."/>
            <person name="Yuan Z."/>
            <person name="Wen Y."/>
            <person name="Yao Z."/>
            <person name="Shen Y."/>
            <person name="Qiang B."/>
            <person name="Hou Y."/>
            <person name="Yu J."/>
            <person name="Jin Q."/>
        </authorList>
    </citation>
    <scope>NUCLEOTIDE SEQUENCE [LARGE SCALE GENOMIC DNA]</scope>
    <source>
        <strain>Sb227</strain>
    </source>
</reference>
<keyword id="KW-0067">ATP-binding</keyword>
<keyword id="KW-0238">DNA-binding</keyword>
<keyword id="KW-0547">Nucleotide-binding</keyword>
<keyword id="KW-0597">Phosphoprotein</keyword>
<keyword id="KW-0804">Transcription</keyword>
<keyword id="KW-0805">Transcription regulation</keyword>
<gene>
    <name evidence="1" type="primary">norR</name>
    <name type="ordered locus">SBO_2809</name>
</gene>
<evidence type="ECO:0000255" key="1">
    <source>
        <dbReference type="HAMAP-Rule" id="MF_01314"/>
    </source>
</evidence>
<evidence type="ECO:0000305" key="2"/>
<organism>
    <name type="scientific">Shigella boydii serotype 4 (strain Sb227)</name>
    <dbReference type="NCBI Taxonomy" id="300268"/>
    <lineage>
        <taxon>Bacteria</taxon>
        <taxon>Pseudomonadati</taxon>
        <taxon>Pseudomonadota</taxon>
        <taxon>Gammaproteobacteria</taxon>
        <taxon>Enterobacterales</taxon>
        <taxon>Enterobacteriaceae</taxon>
        <taxon>Shigella</taxon>
    </lineage>
</organism>
<accession>Q31X73</accession>
<name>NORR_SHIBS</name>
<comment type="function">
    <text evidence="1">Required for the expression of anaerobic nitric oxide (NO) reductase, acts as a transcriptional activator for at least the norVW operon. Activation also requires sigma-54.</text>
</comment>
<comment type="pathway">
    <text evidence="1">Nitrogen metabolism; nitric oxide reduction.</text>
</comment>
<comment type="sequence caution" evidence="2">
    <conflict type="erroneous initiation">
        <sequence resource="EMBL-CDS" id="ABB67335"/>
    </conflict>
</comment>
<feature type="chain" id="PRO_0000305624" description="Anaerobic nitric oxide reductase transcription regulator NorR">
    <location>
        <begin position="1"/>
        <end position="504"/>
    </location>
</feature>
<feature type="domain" description="Sigma-54 factor interaction" evidence="1">
    <location>
        <begin position="187"/>
        <end position="416"/>
    </location>
</feature>
<feature type="DNA-binding region" description="H-T-H motif" evidence="1">
    <location>
        <begin position="479"/>
        <end position="498"/>
    </location>
</feature>
<feature type="binding site" evidence="1">
    <location>
        <begin position="215"/>
        <end position="222"/>
    </location>
    <ligand>
        <name>ATP</name>
        <dbReference type="ChEBI" id="CHEBI:30616"/>
    </ligand>
</feature>
<feature type="binding site" evidence="1">
    <location>
        <begin position="278"/>
        <end position="287"/>
    </location>
    <ligand>
        <name>ATP</name>
        <dbReference type="ChEBI" id="CHEBI:30616"/>
    </ligand>
</feature>
<feature type="modified residue" description="4-aspartylphosphate" evidence="1">
    <location>
        <position position="57"/>
    </location>
</feature>